<accession>A2AV36</accession>
<accession>Q803G6</accession>
<gene>
    <name type="primary">prmt7</name>
    <name type="ORF">ch211-51l3.2</name>
</gene>
<proteinExistence type="evidence at transcript level"/>
<sequence>MKTFCGRANPTTGALDWVEESEEYDYHQEIARSCYADMLHDKDRNEKYYEGIRAAVRRVKARGERPVVLDIGTGTGLLSMMAVTAGADFCYAIEVFKPMAQAASCIVERNGFSDKIKIINKHSTEVTVGPDGDMQERANILVTELFDTELIGEGALPSYEHAHMHLVQTGCEAVPHRATIYAQLVESDMLWKWAQMRPIDVDGHRLMPPGAVQECAGAPSVCDIQLSQVPTDAFTAISPVCTMFSVDFSKPVSSAAQSYTVRFKSQTGGRAQVVLSWWDIDMDPEGNIVCTMAPSWSYADPHAYPWRDHWMQSVYFLPAEENVSEGEELMLMVSHDDYSLWYSLTHSEQNDVRVAPFRPCCTCQAHLVWTRPRFGELNDEQRTESYVSALRSILKPDSVCLSVSDGSLLPVFAHLLGSKKVFSLESSGMAKQVIEQVLHTNSLKDGVQLLGIRAEQLSLADLDGNQISVLMGEPYFSTSLLPWHSLFFWYCRTAVAQLLQPDATILPRAATLYAVAVEFQDLWRIRFPCGTCEGFDVSPMDEMIQRSLDFRESWEAEPHPLWEYPCRALTKPCPVMTFDFTQCVPEQPISSDGAVPFTGRGRCHGVALWMEYQLTDDISVSMGLTKAVSQEGACEWNPHRKQGVFFFRSAKETSGDGREDLSYSLTFEPHSGDIKMDFSITES</sequence>
<protein>
    <recommendedName>
        <fullName>Protein arginine N-methyltransferase 7</fullName>
        <ecNumber evidence="2">2.1.1.321</ecNumber>
    </recommendedName>
    <alternativeName>
        <fullName>Histone-arginine N-methyltransferase PRMT7</fullName>
    </alternativeName>
    <alternativeName>
        <fullName>[Myelin basic protein]-arginine N-methyltransferase PRMT7</fullName>
    </alternativeName>
</protein>
<reference key="1">
    <citation type="journal article" date="2013" name="Nature">
        <title>The zebrafish reference genome sequence and its relationship to the human genome.</title>
        <authorList>
            <person name="Howe K."/>
            <person name="Clark M.D."/>
            <person name="Torroja C.F."/>
            <person name="Torrance J."/>
            <person name="Berthelot C."/>
            <person name="Muffato M."/>
            <person name="Collins J.E."/>
            <person name="Humphray S."/>
            <person name="McLaren K."/>
            <person name="Matthews L."/>
            <person name="McLaren S."/>
            <person name="Sealy I."/>
            <person name="Caccamo M."/>
            <person name="Churcher C."/>
            <person name="Scott C."/>
            <person name="Barrett J.C."/>
            <person name="Koch R."/>
            <person name="Rauch G.J."/>
            <person name="White S."/>
            <person name="Chow W."/>
            <person name="Kilian B."/>
            <person name="Quintais L.T."/>
            <person name="Guerra-Assuncao J.A."/>
            <person name="Zhou Y."/>
            <person name="Gu Y."/>
            <person name="Yen J."/>
            <person name="Vogel J.H."/>
            <person name="Eyre T."/>
            <person name="Redmond S."/>
            <person name="Banerjee R."/>
            <person name="Chi J."/>
            <person name="Fu B."/>
            <person name="Langley E."/>
            <person name="Maguire S.F."/>
            <person name="Laird G.K."/>
            <person name="Lloyd D."/>
            <person name="Kenyon E."/>
            <person name="Donaldson S."/>
            <person name="Sehra H."/>
            <person name="Almeida-King J."/>
            <person name="Loveland J."/>
            <person name="Trevanion S."/>
            <person name="Jones M."/>
            <person name="Quail M."/>
            <person name="Willey D."/>
            <person name="Hunt A."/>
            <person name="Burton J."/>
            <person name="Sims S."/>
            <person name="McLay K."/>
            <person name="Plumb B."/>
            <person name="Davis J."/>
            <person name="Clee C."/>
            <person name="Oliver K."/>
            <person name="Clark R."/>
            <person name="Riddle C."/>
            <person name="Elliot D."/>
            <person name="Threadgold G."/>
            <person name="Harden G."/>
            <person name="Ware D."/>
            <person name="Begum S."/>
            <person name="Mortimore B."/>
            <person name="Kerry G."/>
            <person name="Heath P."/>
            <person name="Phillimore B."/>
            <person name="Tracey A."/>
            <person name="Corby N."/>
            <person name="Dunn M."/>
            <person name="Johnson C."/>
            <person name="Wood J."/>
            <person name="Clark S."/>
            <person name="Pelan S."/>
            <person name="Griffiths G."/>
            <person name="Smith M."/>
            <person name="Glithero R."/>
            <person name="Howden P."/>
            <person name="Barker N."/>
            <person name="Lloyd C."/>
            <person name="Stevens C."/>
            <person name="Harley J."/>
            <person name="Holt K."/>
            <person name="Panagiotidis G."/>
            <person name="Lovell J."/>
            <person name="Beasley H."/>
            <person name="Henderson C."/>
            <person name="Gordon D."/>
            <person name="Auger K."/>
            <person name="Wright D."/>
            <person name="Collins J."/>
            <person name="Raisen C."/>
            <person name="Dyer L."/>
            <person name="Leung K."/>
            <person name="Robertson L."/>
            <person name="Ambridge K."/>
            <person name="Leongamornlert D."/>
            <person name="McGuire S."/>
            <person name="Gilderthorp R."/>
            <person name="Griffiths C."/>
            <person name="Manthravadi D."/>
            <person name="Nichol S."/>
            <person name="Barker G."/>
            <person name="Whitehead S."/>
            <person name="Kay M."/>
            <person name="Brown J."/>
            <person name="Murnane C."/>
            <person name="Gray E."/>
            <person name="Humphries M."/>
            <person name="Sycamore N."/>
            <person name="Barker D."/>
            <person name="Saunders D."/>
            <person name="Wallis J."/>
            <person name="Babbage A."/>
            <person name="Hammond S."/>
            <person name="Mashreghi-Mohammadi M."/>
            <person name="Barr L."/>
            <person name="Martin S."/>
            <person name="Wray P."/>
            <person name="Ellington A."/>
            <person name="Matthews N."/>
            <person name="Ellwood M."/>
            <person name="Woodmansey R."/>
            <person name="Clark G."/>
            <person name="Cooper J."/>
            <person name="Tromans A."/>
            <person name="Grafham D."/>
            <person name="Skuce C."/>
            <person name="Pandian R."/>
            <person name="Andrews R."/>
            <person name="Harrison E."/>
            <person name="Kimberley A."/>
            <person name="Garnett J."/>
            <person name="Fosker N."/>
            <person name="Hall R."/>
            <person name="Garner P."/>
            <person name="Kelly D."/>
            <person name="Bird C."/>
            <person name="Palmer S."/>
            <person name="Gehring I."/>
            <person name="Berger A."/>
            <person name="Dooley C.M."/>
            <person name="Ersan-Urun Z."/>
            <person name="Eser C."/>
            <person name="Geiger H."/>
            <person name="Geisler M."/>
            <person name="Karotki L."/>
            <person name="Kirn A."/>
            <person name="Konantz J."/>
            <person name="Konantz M."/>
            <person name="Oberlander M."/>
            <person name="Rudolph-Geiger S."/>
            <person name="Teucke M."/>
            <person name="Lanz C."/>
            <person name="Raddatz G."/>
            <person name="Osoegawa K."/>
            <person name="Zhu B."/>
            <person name="Rapp A."/>
            <person name="Widaa S."/>
            <person name="Langford C."/>
            <person name="Yang F."/>
            <person name="Schuster S.C."/>
            <person name="Carter N.P."/>
            <person name="Harrow J."/>
            <person name="Ning Z."/>
            <person name="Herrero J."/>
            <person name="Searle S.M."/>
            <person name="Enright A."/>
            <person name="Geisler R."/>
            <person name="Plasterk R.H."/>
            <person name="Lee C."/>
            <person name="Westerfield M."/>
            <person name="de Jong P.J."/>
            <person name="Zon L.I."/>
            <person name="Postlethwait J.H."/>
            <person name="Nusslein-Volhard C."/>
            <person name="Hubbard T.J."/>
            <person name="Roest Crollius H."/>
            <person name="Rogers J."/>
            <person name="Stemple D.L."/>
        </authorList>
    </citation>
    <scope>NUCLEOTIDE SEQUENCE [LARGE SCALE GENOMIC DNA]</scope>
    <source>
        <strain>Tuebingen</strain>
    </source>
</reference>
<reference key="2">
    <citation type="submission" date="2003-01" db="EMBL/GenBank/DDBJ databases">
        <authorList>
            <consortium name="NIH - Zebrafish Gene Collection (ZGC) project"/>
        </authorList>
    </citation>
    <scope>NUCLEOTIDE SEQUENCE [LARGE SCALE MRNA] OF 1-682</scope>
    <source>
        <strain>AB</strain>
    </source>
</reference>
<dbReference type="EC" id="2.1.1.321" evidence="2"/>
<dbReference type="EMBL" id="AL929309">
    <property type="protein sequence ID" value="CAM14259.1"/>
    <property type="molecule type" value="Genomic_DNA"/>
</dbReference>
<dbReference type="EMBL" id="BC044492">
    <property type="protein sequence ID" value="AAH44492.1"/>
    <property type="status" value="ALT_SEQ"/>
    <property type="molecule type" value="mRNA"/>
</dbReference>
<dbReference type="RefSeq" id="NP_956797.2">
    <property type="nucleotide sequence ID" value="NM_200503.2"/>
</dbReference>
<dbReference type="SMR" id="A2AV36"/>
<dbReference type="FunCoup" id="A2AV36">
    <property type="interactions" value="3536"/>
</dbReference>
<dbReference type="STRING" id="7955.ENSDARP00000068099"/>
<dbReference type="PaxDb" id="7955-ENSDARP00000068099"/>
<dbReference type="PeptideAtlas" id="A2AV36"/>
<dbReference type="Ensembl" id="ENSDART00000073609">
    <property type="protein sequence ID" value="ENSDARP00000068099"/>
    <property type="gene ID" value="ENSDARG00000051902"/>
</dbReference>
<dbReference type="Ensembl" id="ENSDART00000183690">
    <property type="protein sequence ID" value="ENSDARP00000151596"/>
    <property type="gene ID" value="ENSDARG00000116251"/>
</dbReference>
<dbReference type="GeneID" id="393475"/>
<dbReference type="KEGG" id="dre:393475"/>
<dbReference type="AGR" id="ZFIN:ZDB-GENE-040426-1560"/>
<dbReference type="CTD" id="54496"/>
<dbReference type="ZFIN" id="ZDB-GENE-040426-1560">
    <property type="gene designation" value="prmt7"/>
</dbReference>
<dbReference type="eggNOG" id="KOG1501">
    <property type="taxonomic scope" value="Eukaryota"/>
</dbReference>
<dbReference type="HOGENOM" id="CLU_015180_0_0_1"/>
<dbReference type="InParanoid" id="A2AV36"/>
<dbReference type="OMA" id="CHHDEYS"/>
<dbReference type="OrthoDB" id="412876at2759"/>
<dbReference type="PhylomeDB" id="A2AV36"/>
<dbReference type="TreeFam" id="TF315221"/>
<dbReference type="BRENDA" id="2.1.1.320">
    <property type="organism ID" value="928"/>
</dbReference>
<dbReference type="PRO" id="PR:A2AV36"/>
<dbReference type="Proteomes" id="UP000000437">
    <property type="component" value="Alternate scaffold 25"/>
</dbReference>
<dbReference type="Proteomes" id="UP000000437">
    <property type="component" value="Chromosome 25"/>
</dbReference>
<dbReference type="Bgee" id="ENSDARG00000051902">
    <property type="expression patterns" value="Expressed in tail and 21 other cell types or tissues"/>
</dbReference>
<dbReference type="GO" id="GO:0005829">
    <property type="term" value="C:cytosol"/>
    <property type="evidence" value="ECO:0000250"/>
    <property type="project" value="UniProtKB"/>
</dbReference>
<dbReference type="GO" id="GO:0005634">
    <property type="term" value="C:nucleus"/>
    <property type="evidence" value="ECO:0000250"/>
    <property type="project" value="UniProtKB"/>
</dbReference>
<dbReference type="GO" id="GO:0044020">
    <property type="term" value="F:histone H4R3 methyltransferase activity"/>
    <property type="evidence" value="ECO:0000250"/>
    <property type="project" value="UniProtKB"/>
</dbReference>
<dbReference type="GO" id="GO:0042054">
    <property type="term" value="F:histone methyltransferase activity"/>
    <property type="evidence" value="ECO:0000318"/>
    <property type="project" value="GO_Central"/>
</dbReference>
<dbReference type="GO" id="GO:0016274">
    <property type="term" value="F:protein-arginine N-methyltransferase activity"/>
    <property type="evidence" value="ECO:0000318"/>
    <property type="project" value="GO_Central"/>
</dbReference>
<dbReference type="GO" id="GO:0035241">
    <property type="term" value="F:protein-arginine omega-N monomethyltransferase activity"/>
    <property type="evidence" value="ECO:0007669"/>
    <property type="project" value="UniProtKB-EC"/>
</dbReference>
<dbReference type="GO" id="GO:0035243">
    <property type="term" value="F:protein-arginine omega-N symmetric methyltransferase activity"/>
    <property type="evidence" value="ECO:0000250"/>
    <property type="project" value="UniProtKB"/>
</dbReference>
<dbReference type="GO" id="GO:0008757">
    <property type="term" value="F:S-adenosylmethionine-dependent methyltransferase activity"/>
    <property type="evidence" value="ECO:0000250"/>
    <property type="project" value="ZFIN"/>
</dbReference>
<dbReference type="GO" id="GO:0006338">
    <property type="term" value="P:chromatin remodeling"/>
    <property type="evidence" value="ECO:0000318"/>
    <property type="project" value="GO_Central"/>
</dbReference>
<dbReference type="GO" id="GO:0007010">
    <property type="term" value="P:cytoskeleton organization"/>
    <property type="evidence" value="ECO:0000315"/>
    <property type="project" value="ZFIN"/>
</dbReference>
<dbReference type="GO" id="GO:0051607">
    <property type="term" value="P:defense response to virus"/>
    <property type="evidence" value="ECO:0000315"/>
    <property type="project" value="ZFIN"/>
</dbReference>
<dbReference type="GO" id="GO:0071514">
    <property type="term" value="P:genomic imprinting"/>
    <property type="evidence" value="ECO:0000250"/>
    <property type="project" value="UniProtKB"/>
</dbReference>
<dbReference type="GO" id="GO:0018216">
    <property type="term" value="P:peptidyl-arginine methylation"/>
    <property type="evidence" value="ECO:0000250"/>
    <property type="project" value="UniProtKB"/>
</dbReference>
<dbReference type="GO" id="GO:0006355">
    <property type="term" value="P:regulation of DNA-templated transcription"/>
    <property type="evidence" value="ECO:0000318"/>
    <property type="project" value="GO_Central"/>
</dbReference>
<dbReference type="GO" id="GO:0000387">
    <property type="term" value="P:spliceosomal snRNP assembly"/>
    <property type="evidence" value="ECO:0000250"/>
    <property type="project" value="UniProtKB"/>
</dbReference>
<dbReference type="CDD" id="cd02440">
    <property type="entry name" value="AdoMet_MTases"/>
    <property type="match status" value="1"/>
</dbReference>
<dbReference type="FunFam" id="2.70.160.11:FF:000010">
    <property type="entry name" value="Protein arginine N-methyltransferase"/>
    <property type="match status" value="1"/>
</dbReference>
<dbReference type="FunFam" id="2.70.160.11:FF:000004">
    <property type="entry name" value="Protein arginine N-methyltransferase 7"/>
    <property type="match status" value="1"/>
</dbReference>
<dbReference type="FunFam" id="3.40.50.150:FF:000070">
    <property type="entry name" value="Protein arginine N-methyltransferase 7"/>
    <property type="match status" value="1"/>
</dbReference>
<dbReference type="FunFam" id="3.40.50.150:FF:000071">
    <property type="entry name" value="Protein arginine N-methyltransferase 7"/>
    <property type="match status" value="1"/>
</dbReference>
<dbReference type="Gene3D" id="2.70.160.11">
    <property type="entry name" value="Hnrnp arginine n-methyltransferase1"/>
    <property type="match status" value="2"/>
</dbReference>
<dbReference type="Gene3D" id="3.40.50.150">
    <property type="entry name" value="Vaccinia Virus protein VP39"/>
    <property type="match status" value="2"/>
</dbReference>
<dbReference type="InterPro" id="IPR025799">
    <property type="entry name" value="Arg_MeTrfase"/>
</dbReference>
<dbReference type="InterPro" id="IPR014644">
    <property type="entry name" value="MeTrfase_PRMT7"/>
</dbReference>
<dbReference type="InterPro" id="IPR055135">
    <property type="entry name" value="PRMT_dom"/>
</dbReference>
<dbReference type="InterPro" id="IPR029063">
    <property type="entry name" value="SAM-dependent_MTases_sf"/>
</dbReference>
<dbReference type="PANTHER" id="PTHR11006">
    <property type="entry name" value="PROTEIN ARGININE N-METHYLTRANSFERASE"/>
    <property type="match status" value="1"/>
</dbReference>
<dbReference type="PANTHER" id="PTHR11006:SF4">
    <property type="entry name" value="PROTEIN ARGININE N-METHYLTRANSFERASE 7"/>
    <property type="match status" value="1"/>
</dbReference>
<dbReference type="Pfam" id="PF06325">
    <property type="entry name" value="PrmA"/>
    <property type="match status" value="1"/>
</dbReference>
<dbReference type="Pfam" id="PF22528">
    <property type="entry name" value="PRMT_C"/>
    <property type="match status" value="2"/>
</dbReference>
<dbReference type="PIRSF" id="PIRSF036946">
    <property type="entry name" value="Arg_N-mtase"/>
    <property type="match status" value="1"/>
</dbReference>
<dbReference type="SUPFAM" id="SSF53335">
    <property type="entry name" value="S-adenosyl-L-methionine-dependent methyltransferases"/>
    <property type="match status" value="2"/>
</dbReference>
<dbReference type="PROSITE" id="PS51678">
    <property type="entry name" value="SAM_MT_PRMT"/>
    <property type="match status" value="2"/>
</dbReference>
<organism>
    <name type="scientific">Danio rerio</name>
    <name type="common">Zebrafish</name>
    <name type="synonym">Brachydanio rerio</name>
    <dbReference type="NCBI Taxonomy" id="7955"/>
    <lineage>
        <taxon>Eukaryota</taxon>
        <taxon>Metazoa</taxon>
        <taxon>Chordata</taxon>
        <taxon>Craniata</taxon>
        <taxon>Vertebrata</taxon>
        <taxon>Euteleostomi</taxon>
        <taxon>Actinopterygii</taxon>
        <taxon>Neopterygii</taxon>
        <taxon>Teleostei</taxon>
        <taxon>Ostariophysi</taxon>
        <taxon>Cypriniformes</taxon>
        <taxon>Danionidae</taxon>
        <taxon>Danioninae</taxon>
        <taxon>Danio</taxon>
    </lineage>
</organism>
<keyword id="KW-0156">Chromatin regulator</keyword>
<keyword id="KW-0963">Cytoplasm</keyword>
<keyword id="KW-0221">Differentiation</keyword>
<keyword id="KW-0489">Methyltransferase</keyword>
<keyword id="KW-0539">Nucleus</keyword>
<keyword id="KW-1185">Reference proteome</keyword>
<keyword id="KW-0677">Repeat</keyword>
<keyword id="KW-0949">S-adenosyl-L-methionine</keyword>
<keyword id="KW-0804">Transcription</keyword>
<keyword id="KW-0805">Transcription regulation</keyword>
<keyword id="KW-0808">Transferase</keyword>
<name>ANM7_DANRE</name>
<comment type="function">
    <text evidence="2">Arginine methyltransferase that can both catalyze the formation of omega-N monomethylarginine (MMA) and symmetrical dimethylarginine (sDMA), with a preference for the formation of MMA. Specifically mediates the symmetrical dimethylation of arginine residues in the small nuclear ribonucleoproteins Sm D1 (SNRPD1) and Sm D3 (SNRPD3); such methylation being required for the assembly and biogenesis of snRNP core particles. Specifically mediates the symmetric dimethylation of histone H4 'Arg-3' to form H4R3me2s. Plays a role in gene imprinting by being recruited by CTCFL at the H19 imprinted control region (ICR) and methylating histone H4 to form H4R3me2s, possibly leading to recruit DNA methyltransferases at these sites. May also play a role in embryonic stem cell (ESC) pluripotency. Also able to mediate the arginine methylation of histone H2A and myelin basic protein (MBP) in vitro; the relevance of such results is however unclear in vivo.</text>
</comment>
<comment type="catalytic activity">
    <reaction evidence="2">
        <text>L-arginyl-[protein] + S-adenosyl-L-methionine = N(omega)-methyl-L-arginyl-[protein] + S-adenosyl-L-homocysteine + H(+)</text>
        <dbReference type="Rhea" id="RHEA:48100"/>
        <dbReference type="Rhea" id="RHEA-COMP:10532"/>
        <dbReference type="Rhea" id="RHEA-COMP:11990"/>
        <dbReference type="ChEBI" id="CHEBI:15378"/>
        <dbReference type="ChEBI" id="CHEBI:29965"/>
        <dbReference type="ChEBI" id="CHEBI:57856"/>
        <dbReference type="ChEBI" id="CHEBI:59789"/>
        <dbReference type="ChEBI" id="CHEBI:65280"/>
        <dbReference type="EC" id="2.1.1.321"/>
    </reaction>
</comment>
<comment type="subcellular location">
    <subcellularLocation>
        <location evidence="1">Cytoplasm</location>
        <location evidence="1">Cytosol</location>
    </subcellularLocation>
    <subcellularLocation>
        <location evidence="1">Nucleus</location>
    </subcellularLocation>
</comment>
<comment type="similarity">
    <text evidence="3">Belongs to the class I-like SAM-binding methyltransferase superfamily. Protein arginine N-methyltransferase family. PRMT7 subfamily.</text>
</comment>
<comment type="sequence caution" evidence="4">
    <conflict type="miscellaneous discrepancy">
        <sequence resource="EMBL-CDS" id="AAH44492"/>
    </conflict>
    <text>Contaminating sequence. Potential poly-A sequence.</text>
</comment>
<feature type="chain" id="PRO_0000373904" description="Protein arginine N-methyltransferase 7">
    <location>
        <begin position="1"/>
        <end position="683"/>
    </location>
</feature>
<feature type="domain" description="SAM-dependent MTase PRMT-type 1" evidence="3">
    <location>
        <begin position="14"/>
        <end position="341"/>
    </location>
</feature>
<feature type="domain" description="SAM-dependent MTase PRMT-type 2" evidence="3">
    <location>
        <begin position="353"/>
        <end position="677"/>
    </location>
</feature>
<feature type="active site" evidence="1">
    <location>
        <position position="144"/>
    </location>
</feature>
<feature type="active site" evidence="1">
    <location>
        <position position="153"/>
    </location>
</feature>
<feature type="sequence conflict" description="In Ref. 2; AAH44492." evidence="4" ref="2">
    <original>V</original>
    <variation>I</variation>
    <location>
        <position position="59"/>
    </location>
</feature>
<feature type="sequence conflict" description="In Ref. 2; AAH44492." evidence="4" ref="2">
    <original>E</original>
    <variation>K</variation>
    <location>
        <position position="348"/>
    </location>
</feature>
<feature type="sequence conflict" description="In Ref. 2; AAH44492." evidence="4" ref="2">
    <original>I</original>
    <variation>M</variation>
    <location>
        <position position="393"/>
    </location>
</feature>
<evidence type="ECO:0000250" key="1"/>
<evidence type="ECO:0000250" key="2">
    <source>
        <dbReference type="UniProtKB" id="Q9NVM4"/>
    </source>
</evidence>
<evidence type="ECO:0000255" key="3">
    <source>
        <dbReference type="PROSITE-ProRule" id="PRU01015"/>
    </source>
</evidence>
<evidence type="ECO:0000305" key="4"/>